<comment type="function">
    <text evidence="2">Component of an amino-acid transport system.</text>
</comment>
<comment type="similarity">
    <text evidence="2">Belongs to the leucine-binding protein family.</text>
</comment>
<gene>
    <name type="ordered locus">BAB2_1153</name>
</gene>
<organism>
    <name type="scientific">Brucella abortus (strain 2308)</name>
    <dbReference type="NCBI Taxonomy" id="359391"/>
    <lineage>
        <taxon>Bacteria</taxon>
        <taxon>Pseudomonadati</taxon>
        <taxon>Pseudomonadota</taxon>
        <taxon>Alphaproteobacteria</taxon>
        <taxon>Hyphomicrobiales</taxon>
        <taxon>Brucellaceae</taxon>
        <taxon>Brucella/Ochrobactrum group</taxon>
        <taxon>Brucella</taxon>
    </lineage>
</organism>
<protein>
    <recommendedName>
        <fullName>Leu/Ile/Val-binding protein homolog 5</fullName>
    </recommendedName>
</protein>
<reference key="1">
    <citation type="journal article" date="2005" name="Infect. Immun.">
        <title>Whole-genome analyses of speciation events in pathogenic Brucellae.</title>
        <authorList>
            <person name="Chain P.S."/>
            <person name="Comerci D.J."/>
            <person name="Tolmasky M.E."/>
            <person name="Larimer F.W."/>
            <person name="Malfatti S.A."/>
            <person name="Vergez L.M."/>
            <person name="Aguero F."/>
            <person name="Land M.L."/>
            <person name="Ugalde R.A."/>
            <person name="Garcia E."/>
        </authorList>
    </citation>
    <scope>NUCLEOTIDE SEQUENCE [LARGE SCALE GENOMIC DNA]</scope>
    <source>
        <strain>2308</strain>
    </source>
</reference>
<proteinExistence type="inferred from homology"/>
<dbReference type="EMBL" id="AM040265">
    <property type="protein sequence ID" value="CAJ13319.1"/>
    <property type="molecule type" value="Genomic_DNA"/>
</dbReference>
<dbReference type="RefSeq" id="WP_002966589.1">
    <property type="nucleotide sequence ID" value="NZ_KN046823.1"/>
</dbReference>
<dbReference type="SMR" id="Q2YJA9"/>
<dbReference type="STRING" id="359391.BAB2_1153"/>
<dbReference type="KEGG" id="bmf:BAB2_1153"/>
<dbReference type="PATRIC" id="fig|359391.11.peg.1938"/>
<dbReference type="HOGENOM" id="CLU_027128_4_1_5"/>
<dbReference type="Proteomes" id="UP000002719">
    <property type="component" value="Chromosome II"/>
</dbReference>
<dbReference type="GO" id="GO:0006865">
    <property type="term" value="P:amino acid transport"/>
    <property type="evidence" value="ECO:0007669"/>
    <property type="project" value="UniProtKB-KW"/>
</dbReference>
<dbReference type="CDD" id="cd06338">
    <property type="entry name" value="PBP1_ABC_ligand_binding-like"/>
    <property type="match status" value="1"/>
</dbReference>
<dbReference type="Gene3D" id="3.40.50.2300">
    <property type="match status" value="2"/>
</dbReference>
<dbReference type="InterPro" id="IPR051010">
    <property type="entry name" value="BCAA_transport"/>
</dbReference>
<dbReference type="InterPro" id="IPR028081">
    <property type="entry name" value="Leu-bd"/>
</dbReference>
<dbReference type="InterPro" id="IPR028082">
    <property type="entry name" value="Peripla_BP_I"/>
</dbReference>
<dbReference type="PANTHER" id="PTHR30483:SF37">
    <property type="entry name" value="ABC TRANSPORTER SUBSTRATE-BINDING PROTEIN"/>
    <property type="match status" value="1"/>
</dbReference>
<dbReference type="PANTHER" id="PTHR30483">
    <property type="entry name" value="LEUCINE-SPECIFIC-BINDING PROTEIN"/>
    <property type="match status" value="1"/>
</dbReference>
<dbReference type="Pfam" id="PF13458">
    <property type="entry name" value="Peripla_BP_6"/>
    <property type="match status" value="1"/>
</dbReference>
<dbReference type="SUPFAM" id="SSF53822">
    <property type="entry name" value="Periplasmic binding protein-like I"/>
    <property type="match status" value="1"/>
</dbReference>
<accession>Q2YJA9</accession>
<feature type="signal peptide" evidence="1">
    <location>
        <begin position="1"/>
        <end position="29"/>
    </location>
</feature>
<feature type="chain" id="PRO_0000282525" description="Leu/Ile/Val-binding protein homolog 5">
    <location>
        <begin position="30"/>
        <end position="406"/>
    </location>
</feature>
<sequence>MIGTRLPAWTRVLACGVAGLSLMTISAKAEDVITLGASVQLSGPVANTGRYYQDAYNITIDKINAAGGVKVDGKPYKLALKIYDNQSNVNLSVRQYTQLVTTDKVNFLLGPFASNFALADSVISEKYRIPMVQGGGASDEIYSRNFKYIFGTLAPASNYFGSTVEMLKGLDPKVTNVALVYADDSFDVSVADGTRKLLKDAGFTIAADEKFATNSTDFTSLISQIKSKNVDAVLVAGHETEVLNFVRQSKSLAFDPKLYSFTVGVPTEDFRKALGKDANYAFGMTAWLPSADLKDRWFGDAAKFETEYKARFNYEPDYHAASGASDVEAFAEAIEKANSLDPQKVRDALASIKFDSLYGPIAFDKQGQINLPQIVVQVQDGKLVEIRGPAGQVNPPQYPMPAWNAR</sequence>
<evidence type="ECO:0000255" key="1"/>
<evidence type="ECO:0000305" key="2"/>
<name>LIVB5_BRUA2</name>
<keyword id="KW-0029">Amino-acid transport</keyword>
<keyword id="KW-1185">Reference proteome</keyword>
<keyword id="KW-0732">Signal</keyword>
<keyword id="KW-0813">Transport</keyword>